<dbReference type="EC" id="4.2.1.10" evidence="1"/>
<dbReference type="EMBL" id="CP000745">
    <property type="protein sequence ID" value="ABR65706.1"/>
    <property type="molecule type" value="Genomic_DNA"/>
</dbReference>
<dbReference type="SMR" id="A6VGY0"/>
<dbReference type="STRING" id="426368.MmarC7_0639"/>
<dbReference type="KEGG" id="mmz:MmarC7_0639"/>
<dbReference type="eggNOG" id="arCOG02097">
    <property type="taxonomic scope" value="Archaea"/>
</dbReference>
<dbReference type="HOGENOM" id="CLU_064444_2_1_2"/>
<dbReference type="OrthoDB" id="34329at2157"/>
<dbReference type="UniPathway" id="UPA00053">
    <property type="reaction ID" value="UER00086"/>
</dbReference>
<dbReference type="GO" id="GO:0003855">
    <property type="term" value="F:3-dehydroquinate dehydratase activity"/>
    <property type="evidence" value="ECO:0007669"/>
    <property type="project" value="UniProtKB-UniRule"/>
</dbReference>
<dbReference type="GO" id="GO:0046279">
    <property type="term" value="P:3,4-dihydroxybenzoate biosynthetic process"/>
    <property type="evidence" value="ECO:0007669"/>
    <property type="project" value="TreeGrafter"/>
</dbReference>
<dbReference type="GO" id="GO:0008652">
    <property type="term" value="P:amino acid biosynthetic process"/>
    <property type="evidence" value="ECO:0007669"/>
    <property type="project" value="UniProtKB-KW"/>
</dbReference>
<dbReference type="GO" id="GO:0009073">
    <property type="term" value="P:aromatic amino acid family biosynthetic process"/>
    <property type="evidence" value="ECO:0007669"/>
    <property type="project" value="UniProtKB-KW"/>
</dbReference>
<dbReference type="GO" id="GO:0009423">
    <property type="term" value="P:chorismate biosynthetic process"/>
    <property type="evidence" value="ECO:0007669"/>
    <property type="project" value="UniProtKB-UniRule"/>
</dbReference>
<dbReference type="CDD" id="cd00502">
    <property type="entry name" value="DHQase_I"/>
    <property type="match status" value="1"/>
</dbReference>
<dbReference type="FunFam" id="3.20.20.70:FF:000047">
    <property type="entry name" value="3-dehydroquinate dehydratase"/>
    <property type="match status" value="1"/>
</dbReference>
<dbReference type="Gene3D" id="3.20.20.70">
    <property type="entry name" value="Aldolase class I"/>
    <property type="match status" value="1"/>
</dbReference>
<dbReference type="HAMAP" id="MF_00214">
    <property type="entry name" value="AroD"/>
    <property type="match status" value="1"/>
</dbReference>
<dbReference type="InterPro" id="IPR018508">
    <property type="entry name" value="3-dehydroquinate_DH_AS"/>
</dbReference>
<dbReference type="InterPro" id="IPR013785">
    <property type="entry name" value="Aldolase_TIM"/>
</dbReference>
<dbReference type="InterPro" id="IPR001381">
    <property type="entry name" value="DHquinase_I"/>
</dbReference>
<dbReference type="InterPro" id="IPR050146">
    <property type="entry name" value="Type-I_3-dehydroquinase"/>
</dbReference>
<dbReference type="NCBIfam" id="TIGR01093">
    <property type="entry name" value="aroD"/>
    <property type="match status" value="1"/>
</dbReference>
<dbReference type="PANTHER" id="PTHR43699">
    <property type="entry name" value="3-DEHYDROQUINATE DEHYDRATASE"/>
    <property type="match status" value="1"/>
</dbReference>
<dbReference type="PANTHER" id="PTHR43699:SF1">
    <property type="entry name" value="3-DEHYDROQUINATE DEHYDRATASE"/>
    <property type="match status" value="1"/>
</dbReference>
<dbReference type="Pfam" id="PF01487">
    <property type="entry name" value="DHquinase_I"/>
    <property type="match status" value="1"/>
</dbReference>
<dbReference type="SUPFAM" id="SSF51569">
    <property type="entry name" value="Aldolase"/>
    <property type="match status" value="1"/>
</dbReference>
<dbReference type="PROSITE" id="PS01028">
    <property type="entry name" value="DEHYDROQUINASE_I"/>
    <property type="match status" value="1"/>
</dbReference>
<sequence length="218" mass="24603">MICIPVIDENVCDAINSAKEALKYGDIVEFRVDLLKDVTFEDIEEFSKVPSIITIRAEWEGGNWKKSDNERIELLKHAIKNNAKFVDIELKEERNLELVKYRNESNSNTKIIISYHDFEKTPEIDELIEVVEKELKIGDIAKFATFAHSKEDTLKILNLMNKYAGKIIAIGMGESGKLTRILGLDFGSILTFASMEGKASAPGQVDVKKLKEILKLIG</sequence>
<organism>
    <name type="scientific">Methanococcus maripaludis (strain C7 / ATCC BAA-1331)</name>
    <dbReference type="NCBI Taxonomy" id="426368"/>
    <lineage>
        <taxon>Archaea</taxon>
        <taxon>Methanobacteriati</taxon>
        <taxon>Methanobacteriota</taxon>
        <taxon>Methanomada group</taxon>
        <taxon>Methanococci</taxon>
        <taxon>Methanococcales</taxon>
        <taxon>Methanococcaceae</taxon>
        <taxon>Methanococcus</taxon>
    </lineage>
</organism>
<gene>
    <name evidence="1" type="primary">aroD</name>
    <name type="ordered locus">MmarC7_0639</name>
</gene>
<feature type="chain" id="PRO_1000043174" description="3-dehydroquinate dehydratase">
    <location>
        <begin position="1"/>
        <end position="218"/>
    </location>
</feature>
<feature type="active site" description="Proton donor/acceptor" evidence="1">
    <location>
        <position position="116"/>
    </location>
</feature>
<feature type="active site" description="Schiff-base intermediate with substrate" evidence="1">
    <location>
        <position position="142"/>
    </location>
</feature>
<feature type="binding site" evidence="1">
    <location>
        <begin position="29"/>
        <end position="31"/>
    </location>
    <ligand>
        <name>3-dehydroquinate</name>
        <dbReference type="ChEBI" id="CHEBI:32364"/>
    </ligand>
</feature>
<feature type="binding site" evidence="1">
    <location>
        <position position="56"/>
    </location>
    <ligand>
        <name>3-dehydroquinate</name>
        <dbReference type="ChEBI" id="CHEBI:32364"/>
    </ligand>
</feature>
<feature type="binding site" evidence="1">
    <location>
        <position position="180"/>
    </location>
    <ligand>
        <name>3-dehydroquinate</name>
        <dbReference type="ChEBI" id="CHEBI:32364"/>
    </ligand>
</feature>
<feature type="binding site" evidence="1">
    <location>
        <position position="200"/>
    </location>
    <ligand>
        <name>3-dehydroquinate</name>
        <dbReference type="ChEBI" id="CHEBI:32364"/>
    </ligand>
</feature>
<feature type="binding site" evidence="1">
    <location>
        <position position="204"/>
    </location>
    <ligand>
        <name>3-dehydroquinate</name>
        <dbReference type="ChEBI" id="CHEBI:32364"/>
    </ligand>
</feature>
<reference key="1">
    <citation type="submission" date="2007-06" db="EMBL/GenBank/DDBJ databases">
        <title>Complete sequence of Methanococcus maripaludis C7.</title>
        <authorList>
            <consortium name="US DOE Joint Genome Institute"/>
            <person name="Copeland A."/>
            <person name="Lucas S."/>
            <person name="Lapidus A."/>
            <person name="Barry K."/>
            <person name="Glavina del Rio T."/>
            <person name="Dalin E."/>
            <person name="Tice H."/>
            <person name="Pitluck S."/>
            <person name="Clum A."/>
            <person name="Schmutz J."/>
            <person name="Larimer F."/>
            <person name="Land M."/>
            <person name="Hauser L."/>
            <person name="Kyrpides N."/>
            <person name="Anderson I."/>
            <person name="Sieprawska-Lupa M."/>
            <person name="Whitman W.B."/>
            <person name="Richardson P."/>
        </authorList>
    </citation>
    <scope>NUCLEOTIDE SEQUENCE [LARGE SCALE GENOMIC DNA]</scope>
    <source>
        <strain>C7 / ATCC BAA-1331</strain>
    </source>
</reference>
<accession>A6VGY0</accession>
<comment type="function">
    <text evidence="1">Involved in the third step of the chorismate pathway, which leads to the biosynthesis of aromatic amino acids. Catalyzes the cis-dehydration of 3-dehydroquinate (DHQ) and introduces the first double bond of the aromatic ring to yield 3-dehydroshikimate.</text>
</comment>
<comment type="catalytic activity">
    <reaction evidence="1">
        <text>3-dehydroquinate = 3-dehydroshikimate + H2O</text>
        <dbReference type="Rhea" id="RHEA:21096"/>
        <dbReference type="ChEBI" id="CHEBI:15377"/>
        <dbReference type="ChEBI" id="CHEBI:16630"/>
        <dbReference type="ChEBI" id="CHEBI:32364"/>
        <dbReference type="EC" id="4.2.1.10"/>
    </reaction>
</comment>
<comment type="pathway">
    <text evidence="1">Metabolic intermediate biosynthesis; chorismate biosynthesis; chorismate from D-erythrose 4-phosphate and phosphoenolpyruvate: step 3/7.</text>
</comment>
<comment type="subunit">
    <text evidence="1">Homodimer.</text>
</comment>
<comment type="similarity">
    <text evidence="1">Belongs to the type-I 3-dehydroquinase family.</text>
</comment>
<name>AROD_METM7</name>
<proteinExistence type="inferred from homology"/>
<evidence type="ECO:0000255" key="1">
    <source>
        <dbReference type="HAMAP-Rule" id="MF_00214"/>
    </source>
</evidence>
<keyword id="KW-0028">Amino-acid biosynthesis</keyword>
<keyword id="KW-0057">Aromatic amino acid biosynthesis</keyword>
<keyword id="KW-0456">Lyase</keyword>
<keyword id="KW-0704">Schiff base</keyword>
<protein>
    <recommendedName>
        <fullName evidence="1">3-dehydroquinate dehydratase</fullName>
        <shortName evidence="1">3-dehydroquinase</shortName>
        <ecNumber evidence="1">4.2.1.10</ecNumber>
    </recommendedName>
    <alternativeName>
        <fullName evidence="1">Type I DHQase</fullName>
    </alternativeName>
    <alternativeName>
        <fullName evidence="1">Type I dehydroquinase</fullName>
        <shortName evidence="1">DHQ1</shortName>
    </alternativeName>
</protein>